<reference key="1">
    <citation type="journal article" date="2007" name="Science">
        <title>Legumes symbioses: absence of nod genes in photosynthetic bradyrhizobia.</title>
        <authorList>
            <person name="Giraud E."/>
            <person name="Moulin L."/>
            <person name="Vallenet D."/>
            <person name="Barbe V."/>
            <person name="Cytryn E."/>
            <person name="Avarre J.-C."/>
            <person name="Jaubert M."/>
            <person name="Simon D."/>
            <person name="Cartieaux F."/>
            <person name="Prin Y."/>
            <person name="Bena G."/>
            <person name="Hannibal L."/>
            <person name="Fardoux J."/>
            <person name="Kojadinovic M."/>
            <person name="Vuillet L."/>
            <person name="Lajus A."/>
            <person name="Cruveiller S."/>
            <person name="Rouy Z."/>
            <person name="Mangenot S."/>
            <person name="Segurens B."/>
            <person name="Dossat C."/>
            <person name="Franck W.L."/>
            <person name="Chang W.-S."/>
            <person name="Saunders E."/>
            <person name="Bruce D."/>
            <person name="Richardson P."/>
            <person name="Normand P."/>
            <person name="Dreyfus B."/>
            <person name="Pignol D."/>
            <person name="Stacey G."/>
            <person name="Emerich D."/>
            <person name="Vermeglio A."/>
            <person name="Medigue C."/>
            <person name="Sadowsky M."/>
        </authorList>
    </citation>
    <scope>NUCLEOTIDE SEQUENCE [LARGE SCALE GENOMIC DNA]</scope>
    <source>
        <strain>BTAi1 / ATCC BAA-1182</strain>
    </source>
</reference>
<organism>
    <name type="scientific">Bradyrhizobium sp. (strain BTAi1 / ATCC BAA-1182)</name>
    <dbReference type="NCBI Taxonomy" id="288000"/>
    <lineage>
        <taxon>Bacteria</taxon>
        <taxon>Pseudomonadati</taxon>
        <taxon>Pseudomonadota</taxon>
        <taxon>Alphaproteobacteria</taxon>
        <taxon>Hyphomicrobiales</taxon>
        <taxon>Nitrobacteraceae</taxon>
        <taxon>Bradyrhizobium</taxon>
    </lineage>
</organism>
<name>RS19_BRASB</name>
<sequence length="92" mass="10218">MVRSVWKGPFVEASLLKKADAARASGRHDVIKIWSRRSTILPQFVGLTFGVYNGQKHVPVAVNEEMVGHKFGEFSPTRTFHGHSGDKKAKKA</sequence>
<comment type="function">
    <text evidence="1">Protein S19 forms a complex with S13 that binds strongly to the 16S ribosomal RNA.</text>
</comment>
<comment type="similarity">
    <text evidence="1">Belongs to the universal ribosomal protein uS19 family.</text>
</comment>
<evidence type="ECO:0000255" key="1">
    <source>
        <dbReference type="HAMAP-Rule" id="MF_00531"/>
    </source>
</evidence>
<evidence type="ECO:0000305" key="2"/>
<protein>
    <recommendedName>
        <fullName evidence="1">Small ribosomal subunit protein uS19</fullName>
    </recommendedName>
    <alternativeName>
        <fullName evidence="2">30S ribosomal protein S19</fullName>
    </alternativeName>
</protein>
<gene>
    <name evidence="1" type="primary">rpsS</name>
    <name type="ordered locus">BBta_5066</name>
</gene>
<dbReference type="EMBL" id="CP000494">
    <property type="protein sequence ID" value="ABQ37067.1"/>
    <property type="molecule type" value="Genomic_DNA"/>
</dbReference>
<dbReference type="RefSeq" id="WP_008963465.1">
    <property type="nucleotide sequence ID" value="NC_009485.1"/>
</dbReference>
<dbReference type="SMR" id="A5ELM3"/>
<dbReference type="STRING" id="288000.BBta_5066"/>
<dbReference type="KEGG" id="bbt:BBta_5066"/>
<dbReference type="eggNOG" id="COG0185">
    <property type="taxonomic scope" value="Bacteria"/>
</dbReference>
<dbReference type="HOGENOM" id="CLU_144911_0_1_5"/>
<dbReference type="OrthoDB" id="9797833at2"/>
<dbReference type="Proteomes" id="UP000000246">
    <property type="component" value="Chromosome"/>
</dbReference>
<dbReference type="GO" id="GO:0005737">
    <property type="term" value="C:cytoplasm"/>
    <property type="evidence" value="ECO:0007669"/>
    <property type="project" value="UniProtKB-ARBA"/>
</dbReference>
<dbReference type="GO" id="GO:0015935">
    <property type="term" value="C:small ribosomal subunit"/>
    <property type="evidence" value="ECO:0007669"/>
    <property type="project" value="InterPro"/>
</dbReference>
<dbReference type="GO" id="GO:0019843">
    <property type="term" value="F:rRNA binding"/>
    <property type="evidence" value="ECO:0007669"/>
    <property type="project" value="UniProtKB-UniRule"/>
</dbReference>
<dbReference type="GO" id="GO:0003735">
    <property type="term" value="F:structural constituent of ribosome"/>
    <property type="evidence" value="ECO:0007669"/>
    <property type="project" value="InterPro"/>
</dbReference>
<dbReference type="GO" id="GO:0000028">
    <property type="term" value="P:ribosomal small subunit assembly"/>
    <property type="evidence" value="ECO:0007669"/>
    <property type="project" value="TreeGrafter"/>
</dbReference>
<dbReference type="GO" id="GO:0006412">
    <property type="term" value="P:translation"/>
    <property type="evidence" value="ECO:0007669"/>
    <property type="project" value="UniProtKB-UniRule"/>
</dbReference>
<dbReference type="FunFam" id="3.30.860.10:FF:000001">
    <property type="entry name" value="30S ribosomal protein S19"/>
    <property type="match status" value="1"/>
</dbReference>
<dbReference type="Gene3D" id="3.30.860.10">
    <property type="entry name" value="30s Ribosomal Protein S19, Chain A"/>
    <property type="match status" value="1"/>
</dbReference>
<dbReference type="HAMAP" id="MF_00531">
    <property type="entry name" value="Ribosomal_uS19"/>
    <property type="match status" value="1"/>
</dbReference>
<dbReference type="InterPro" id="IPR002222">
    <property type="entry name" value="Ribosomal_uS19"/>
</dbReference>
<dbReference type="InterPro" id="IPR005732">
    <property type="entry name" value="Ribosomal_uS19_bac-type"/>
</dbReference>
<dbReference type="InterPro" id="IPR020934">
    <property type="entry name" value="Ribosomal_uS19_CS"/>
</dbReference>
<dbReference type="InterPro" id="IPR023575">
    <property type="entry name" value="Ribosomal_uS19_SF"/>
</dbReference>
<dbReference type="NCBIfam" id="TIGR01050">
    <property type="entry name" value="rpsS_bact"/>
    <property type="match status" value="1"/>
</dbReference>
<dbReference type="PANTHER" id="PTHR11880">
    <property type="entry name" value="RIBOSOMAL PROTEIN S19P FAMILY MEMBER"/>
    <property type="match status" value="1"/>
</dbReference>
<dbReference type="PANTHER" id="PTHR11880:SF8">
    <property type="entry name" value="SMALL RIBOSOMAL SUBUNIT PROTEIN US19M"/>
    <property type="match status" value="1"/>
</dbReference>
<dbReference type="Pfam" id="PF00203">
    <property type="entry name" value="Ribosomal_S19"/>
    <property type="match status" value="1"/>
</dbReference>
<dbReference type="PIRSF" id="PIRSF002144">
    <property type="entry name" value="Ribosomal_S19"/>
    <property type="match status" value="1"/>
</dbReference>
<dbReference type="PRINTS" id="PR00975">
    <property type="entry name" value="RIBOSOMALS19"/>
</dbReference>
<dbReference type="SUPFAM" id="SSF54570">
    <property type="entry name" value="Ribosomal protein S19"/>
    <property type="match status" value="1"/>
</dbReference>
<dbReference type="PROSITE" id="PS00323">
    <property type="entry name" value="RIBOSOMAL_S19"/>
    <property type="match status" value="1"/>
</dbReference>
<keyword id="KW-1185">Reference proteome</keyword>
<keyword id="KW-0687">Ribonucleoprotein</keyword>
<keyword id="KW-0689">Ribosomal protein</keyword>
<keyword id="KW-0694">RNA-binding</keyword>
<keyword id="KW-0699">rRNA-binding</keyword>
<accession>A5ELM3</accession>
<proteinExistence type="inferred from homology"/>
<feature type="chain" id="PRO_1000051016" description="Small ribosomal subunit protein uS19">
    <location>
        <begin position="1"/>
        <end position="92"/>
    </location>
</feature>